<accession>Q37M27</accession>
<gene>
    <name evidence="1" type="primary">rplR</name>
    <name type="ordered locus">RPD_3168</name>
</gene>
<dbReference type="EMBL" id="CP000283">
    <property type="protein sequence ID" value="ABE40394.1"/>
    <property type="molecule type" value="Genomic_DNA"/>
</dbReference>
<dbReference type="SMR" id="Q37M27"/>
<dbReference type="STRING" id="316057.RPD_3168"/>
<dbReference type="KEGG" id="rpd:RPD_3168"/>
<dbReference type="eggNOG" id="COG0256">
    <property type="taxonomic scope" value="Bacteria"/>
</dbReference>
<dbReference type="HOGENOM" id="CLU_098841_0_1_5"/>
<dbReference type="BioCyc" id="RPAL316057:RPD_RS15905-MONOMER"/>
<dbReference type="Proteomes" id="UP000001818">
    <property type="component" value="Chromosome"/>
</dbReference>
<dbReference type="GO" id="GO:0022625">
    <property type="term" value="C:cytosolic large ribosomal subunit"/>
    <property type="evidence" value="ECO:0007669"/>
    <property type="project" value="TreeGrafter"/>
</dbReference>
<dbReference type="GO" id="GO:0008097">
    <property type="term" value="F:5S rRNA binding"/>
    <property type="evidence" value="ECO:0007669"/>
    <property type="project" value="TreeGrafter"/>
</dbReference>
<dbReference type="GO" id="GO:0003735">
    <property type="term" value="F:structural constituent of ribosome"/>
    <property type="evidence" value="ECO:0007669"/>
    <property type="project" value="InterPro"/>
</dbReference>
<dbReference type="GO" id="GO:0006412">
    <property type="term" value="P:translation"/>
    <property type="evidence" value="ECO:0007669"/>
    <property type="project" value="UniProtKB-UniRule"/>
</dbReference>
<dbReference type="CDD" id="cd00432">
    <property type="entry name" value="Ribosomal_L18_L5e"/>
    <property type="match status" value="1"/>
</dbReference>
<dbReference type="FunFam" id="3.30.420.100:FF:000001">
    <property type="entry name" value="50S ribosomal protein L18"/>
    <property type="match status" value="1"/>
</dbReference>
<dbReference type="Gene3D" id="3.30.420.100">
    <property type="match status" value="1"/>
</dbReference>
<dbReference type="HAMAP" id="MF_01337_B">
    <property type="entry name" value="Ribosomal_uL18_B"/>
    <property type="match status" value="1"/>
</dbReference>
<dbReference type="InterPro" id="IPR004389">
    <property type="entry name" value="Ribosomal_uL18_bac-type"/>
</dbReference>
<dbReference type="InterPro" id="IPR005484">
    <property type="entry name" value="Ribosomal_uL18_bac/euk"/>
</dbReference>
<dbReference type="NCBIfam" id="TIGR00060">
    <property type="entry name" value="L18_bact"/>
    <property type="match status" value="1"/>
</dbReference>
<dbReference type="PANTHER" id="PTHR12899">
    <property type="entry name" value="39S RIBOSOMAL PROTEIN L18, MITOCHONDRIAL"/>
    <property type="match status" value="1"/>
</dbReference>
<dbReference type="PANTHER" id="PTHR12899:SF3">
    <property type="entry name" value="LARGE RIBOSOMAL SUBUNIT PROTEIN UL18M"/>
    <property type="match status" value="1"/>
</dbReference>
<dbReference type="Pfam" id="PF00861">
    <property type="entry name" value="Ribosomal_L18p"/>
    <property type="match status" value="1"/>
</dbReference>
<dbReference type="SUPFAM" id="SSF53137">
    <property type="entry name" value="Translational machinery components"/>
    <property type="match status" value="1"/>
</dbReference>
<name>RL18_RHOPS</name>
<protein>
    <recommendedName>
        <fullName evidence="1">Large ribosomal subunit protein uL18</fullName>
    </recommendedName>
    <alternativeName>
        <fullName evidence="2">50S ribosomal protein L18</fullName>
    </alternativeName>
</protein>
<keyword id="KW-0687">Ribonucleoprotein</keyword>
<keyword id="KW-0689">Ribosomal protein</keyword>
<keyword id="KW-0694">RNA-binding</keyword>
<keyword id="KW-0699">rRNA-binding</keyword>
<organism>
    <name type="scientific">Rhodopseudomonas palustris (strain BisB5)</name>
    <dbReference type="NCBI Taxonomy" id="316057"/>
    <lineage>
        <taxon>Bacteria</taxon>
        <taxon>Pseudomonadati</taxon>
        <taxon>Pseudomonadota</taxon>
        <taxon>Alphaproteobacteria</taxon>
        <taxon>Hyphomicrobiales</taxon>
        <taxon>Nitrobacteraceae</taxon>
        <taxon>Rhodopseudomonas</taxon>
    </lineage>
</organism>
<reference key="1">
    <citation type="submission" date="2006-03" db="EMBL/GenBank/DDBJ databases">
        <title>Complete sequence of Rhodopseudomonas palustris BisB5.</title>
        <authorList>
            <consortium name="US DOE Joint Genome Institute"/>
            <person name="Copeland A."/>
            <person name="Lucas S."/>
            <person name="Lapidus A."/>
            <person name="Barry K."/>
            <person name="Detter J.C."/>
            <person name="Glavina del Rio T."/>
            <person name="Hammon N."/>
            <person name="Israni S."/>
            <person name="Dalin E."/>
            <person name="Tice H."/>
            <person name="Pitluck S."/>
            <person name="Chain P."/>
            <person name="Malfatti S."/>
            <person name="Shin M."/>
            <person name="Vergez L."/>
            <person name="Schmutz J."/>
            <person name="Larimer F."/>
            <person name="Land M."/>
            <person name="Hauser L."/>
            <person name="Pelletier D.A."/>
            <person name="Kyrpides N."/>
            <person name="Lykidis A."/>
            <person name="Oda Y."/>
            <person name="Harwood C.S."/>
            <person name="Richardson P."/>
        </authorList>
    </citation>
    <scope>NUCLEOTIDE SEQUENCE [LARGE SCALE GENOMIC DNA]</scope>
    <source>
        <strain>BisB5</strain>
    </source>
</reference>
<comment type="function">
    <text evidence="1">This is one of the proteins that bind and probably mediate the attachment of the 5S RNA into the large ribosomal subunit, where it forms part of the central protuberance.</text>
</comment>
<comment type="subunit">
    <text evidence="1">Part of the 50S ribosomal subunit; part of the 5S rRNA/L5/L18/L25 subcomplex. Contacts the 5S and 23S rRNAs.</text>
</comment>
<comment type="similarity">
    <text evidence="1">Belongs to the universal ribosomal protein uL18 family.</text>
</comment>
<feature type="chain" id="PRO_0000251359" description="Large ribosomal subunit protein uL18">
    <location>
        <begin position="1"/>
        <end position="120"/>
    </location>
</feature>
<proteinExistence type="inferred from homology"/>
<evidence type="ECO:0000255" key="1">
    <source>
        <dbReference type="HAMAP-Rule" id="MF_01337"/>
    </source>
</evidence>
<evidence type="ECO:0000305" key="2"/>
<sequence>MSKLNVTNARRKTRVRIALRRTANGRPRLSVFRSSKHIYAQVIDDLKGETLASASSLEKSLRDAGNTGANIDAAKAVGKLLAERAVQQGVKEVVFDRGGYLYHGRVKALADAARESGLSF</sequence>